<dbReference type="EC" id="2.7.1.148" evidence="1"/>
<dbReference type="EMBL" id="CP000688">
    <property type="protein sequence ID" value="ABQ16969.1"/>
    <property type="molecule type" value="Genomic_DNA"/>
</dbReference>
<dbReference type="SMR" id="A5FS53"/>
<dbReference type="KEGG" id="deb:DehaBAV1_0384"/>
<dbReference type="PATRIC" id="fig|216389.18.peg.425"/>
<dbReference type="HOGENOM" id="CLU_053057_1_1_0"/>
<dbReference type="UniPathway" id="UPA00056">
    <property type="reaction ID" value="UER00094"/>
</dbReference>
<dbReference type="GO" id="GO:0050515">
    <property type="term" value="F:4-(cytidine 5'-diphospho)-2-C-methyl-D-erythritol kinase activity"/>
    <property type="evidence" value="ECO:0007669"/>
    <property type="project" value="UniProtKB-UniRule"/>
</dbReference>
<dbReference type="GO" id="GO:0005524">
    <property type="term" value="F:ATP binding"/>
    <property type="evidence" value="ECO:0007669"/>
    <property type="project" value="UniProtKB-UniRule"/>
</dbReference>
<dbReference type="GO" id="GO:0019288">
    <property type="term" value="P:isopentenyl diphosphate biosynthetic process, methylerythritol 4-phosphate pathway"/>
    <property type="evidence" value="ECO:0007669"/>
    <property type="project" value="UniProtKB-UniRule"/>
</dbReference>
<dbReference type="GO" id="GO:0016114">
    <property type="term" value="P:terpenoid biosynthetic process"/>
    <property type="evidence" value="ECO:0007669"/>
    <property type="project" value="InterPro"/>
</dbReference>
<dbReference type="Gene3D" id="3.30.230.10">
    <property type="match status" value="1"/>
</dbReference>
<dbReference type="Gene3D" id="3.30.70.890">
    <property type="entry name" value="GHMP kinase, C-terminal domain"/>
    <property type="match status" value="1"/>
</dbReference>
<dbReference type="HAMAP" id="MF_00061">
    <property type="entry name" value="IspE"/>
    <property type="match status" value="1"/>
</dbReference>
<dbReference type="InterPro" id="IPR013750">
    <property type="entry name" value="GHMP_kinase_C_dom"/>
</dbReference>
<dbReference type="InterPro" id="IPR036554">
    <property type="entry name" value="GHMP_kinase_C_sf"/>
</dbReference>
<dbReference type="InterPro" id="IPR006204">
    <property type="entry name" value="GHMP_kinase_N_dom"/>
</dbReference>
<dbReference type="InterPro" id="IPR004424">
    <property type="entry name" value="IspE"/>
</dbReference>
<dbReference type="InterPro" id="IPR020568">
    <property type="entry name" value="Ribosomal_Su5_D2-typ_SF"/>
</dbReference>
<dbReference type="InterPro" id="IPR014721">
    <property type="entry name" value="Ribsml_uS5_D2-typ_fold_subgr"/>
</dbReference>
<dbReference type="NCBIfam" id="TIGR00154">
    <property type="entry name" value="ispE"/>
    <property type="match status" value="1"/>
</dbReference>
<dbReference type="PANTHER" id="PTHR43527">
    <property type="entry name" value="4-DIPHOSPHOCYTIDYL-2-C-METHYL-D-ERYTHRITOL KINASE, CHLOROPLASTIC"/>
    <property type="match status" value="1"/>
</dbReference>
<dbReference type="PANTHER" id="PTHR43527:SF2">
    <property type="entry name" value="4-DIPHOSPHOCYTIDYL-2-C-METHYL-D-ERYTHRITOL KINASE, CHLOROPLASTIC"/>
    <property type="match status" value="1"/>
</dbReference>
<dbReference type="Pfam" id="PF08544">
    <property type="entry name" value="GHMP_kinases_C"/>
    <property type="match status" value="1"/>
</dbReference>
<dbReference type="Pfam" id="PF00288">
    <property type="entry name" value="GHMP_kinases_N"/>
    <property type="match status" value="1"/>
</dbReference>
<dbReference type="PIRSF" id="PIRSF010376">
    <property type="entry name" value="IspE"/>
    <property type="match status" value="1"/>
</dbReference>
<dbReference type="SUPFAM" id="SSF55060">
    <property type="entry name" value="GHMP Kinase, C-terminal domain"/>
    <property type="match status" value="1"/>
</dbReference>
<dbReference type="SUPFAM" id="SSF54211">
    <property type="entry name" value="Ribosomal protein S5 domain 2-like"/>
    <property type="match status" value="1"/>
</dbReference>
<feature type="chain" id="PRO_1000075046" description="4-diphosphocytidyl-2-C-methyl-D-erythritol kinase">
    <location>
        <begin position="1"/>
        <end position="284"/>
    </location>
</feature>
<feature type="active site" evidence="1">
    <location>
        <position position="9"/>
    </location>
</feature>
<feature type="active site" evidence="1">
    <location>
        <position position="132"/>
    </location>
</feature>
<feature type="binding site" evidence="1">
    <location>
        <begin position="90"/>
        <end position="100"/>
    </location>
    <ligand>
        <name>ATP</name>
        <dbReference type="ChEBI" id="CHEBI:30616"/>
    </ligand>
</feature>
<sequence>MLTLLAPAKVNLSLEVLYRRKDGYHELRSIIQSLSLCDRLSFSPSKTVHISSDSQDWQADLSLVSKAVELFSERCGQNTGVNLKIAKRIPLVSGLGGDSSCAAAVLKGLNKLWGCGYPCWRLMEIGAELGSDVPFFIMGGTAMMEGRGETVTPLPTLTQMWAVLLVPALDMPADKTAALYRNLRPDSFTSGEISDKLLESICQGKLSLSLCFNAFEKVAFELFPELVKYRWQFLEAGAYQISLAGAGPTLFTLLKDKNTAEKIYHNLCQKGHQAYLVSTLGPLD</sequence>
<keyword id="KW-0067">ATP-binding</keyword>
<keyword id="KW-0414">Isoprene biosynthesis</keyword>
<keyword id="KW-0418">Kinase</keyword>
<keyword id="KW-0547">Nucleotide-binding</keyword>
<keyword id="KW-0808">Transferase</keyword>
<protein>
    <recommendedName>
        <fullName evidence="1">4-diphosphocytidyl-2-C-methyl-D-erythritol kinase</fullName>
        <shortName evidence="1">CMK</shortName>
        <ecNumber evidence="1">2.7.1.148</ecNumber>
    </recommendedName>
    <alternativeName>
        <fullName evidence="1">4-(cytidine-5'-diphospho)-2-C-methyl-D-erythritol kinase</fullName>
    </alternativeName>
</protein>
<proteinExistence type="inferred from homology"/>
<gene>
    <name evidence="1" type="primary">ispE</name>
    <name type="ordered locus">DehaBAV1_0384</name>
</gene>
<organism>
    <name type="scientific">Dehalococcoides mccartyi (strain ATCC BAA-2100 / JCM 16839 / KCTC 5957 / BAV1)</name>
    <dbReference type="NCBI Taxonomy" id="216389"/>
    <lineage>
        <taxon>Bacteria</taxon>
        <taxon>Bacillati</taxon>
        <taxon>Chloroflexota</taxon>
        <taxon>Dehalococcoidia</taxon>
        <taxon>Dehalococcoidales</taxon>
        <taxon>Dehalococcoidaceae</taxon>
        <taxon>Dehalococcoides</taxon>
    </lineage>
</organism>
<comment type="function">
    <text evidence="1">Catalyzes the phosphorylation of the position 2 hydroxy group of 4-diphosphocytidyl-2C-methyl-D-erythritol.</text>
</comment>
<comment type="catalytic activity">
    <reaction evidence="1">
        <text>4-CDP-2-C-methyl-D-erythritol + ATP = 4-CDP-2-C-methyl-D-erythritol 2-phosphate + ADP + H(+)</text>
        <dbReference type="Rhea" id="RHEA:18437"/>
        <dbReference type="ChEBI" id="CHEBI:15378"/>
        <dbReference type="ChEBI" id="CHEBI:30616"/>
        <dbReference type="ChEBI" id="CHEBI:57823"/>
        <dbReference type="ChEBI" id="CHEBI:57919"/>
        <dbReference type="ChEBI" id="CHEBI:456216"/>
        <dbReference type="EC" id="2.7.1.148"/>
    </reaction>
</comment>
<comment type="pathway">
    <text evidence="1">Isoprenoid biosynthesis; isopentenyl diphosphate biosynthesis via DXP pathway; isopentenyl diphosphate from 1-deoxy-D-xylulose 5-phosphate: step 3/6.</text>
</comment>
<comment type="similarity">
    <text evidence="1">Belongs to the GHMP kinase family. IspE subfamily.</text>
</comment>
<evidence type="ECO:0000255" key="1">
    <source>
        <dbReference type="HAMAP-Rule" id="MF_00061"/>
    </source>
</evidence>
<name>ISPE_DEHMB</name>
<accession>A5FS53</accession>
<reference key="1">
    <citation type="submission" date="2007-05" db="EMBL/GenBank/DDBJ databases">
        <title>Complete sequence of Dehalococcoides sp. BAV1.</title>
        <authorList>
            <consortium name="US DOE Joint Genome Institute"/>
            <person name="Copeland A."/>
            <person name="Lucas S."/>
            <person name="Lapidus A."/>
            <person name="Barry K."/>
            <person name="Detter J.C."/>
            <person name="Glavina del Rio T."/>
            <person name="Hammon N."/>
            <person name="Israni S."/>
            <person name="Pitluck S."/>
            <person name="Lowry S."/>
            <person name="Clum A."/>
            <person name="Schmutz J."/>
            <person name="Larimer F."/>
            <person name="Land M."/>
            <person name="Hauser L."/>
            <person name="Kyrpides N."/>
            <person name="Kim E."/>
            <person name="Ritalahti K.M."/>
            <person name="Loeffler F."/>
            <person name="Richardson P."/>
        </authorList>
    </citation>
    <scope>NUCLEOTIDE SEQUENCE [LARGE SCALE GENOMIC DNA]</scope>
    <source>
        <strain>ATCC BAA-2100 / JCM 16839 / KCTC 5957 / BAV1</strain>
    </source>
</reference>